<organism>
    <name type="scientific">Laribacter hongkongensis (strain HLHK9)</name>
    <dbReference type="NCBI Taxonomy" id="557598"/>
    <lineage>
        <taxon>Bacteria</taxon>
        <taxon>Pseudomonadati</taxon>
        <taxon>Pseudomonadota</taxon>
        <taxon>Betaproteobacteria</taxon>
        <taxon>Neisseriales</taxon>
        <taxon>Aquaspirillaceae</taxon>
        <taxon>Laribacter</taxon>
    </lineage>
</organism>
<proteinExistence type="inferred from homology"/>
<protein>
    <recommendedName>
        <fullName evidence="1">NADH-quinone oxidoreductase subunit N</fullName>
        <ecNumber evidence="1">7.1.1.-</ecNumber>
    </recommendedName>
    <alternativeName>
        <fullName evidence="1">NADH dehydrogenase I subunit N</fullName>
    </alternativeName>
    <alternativeName>
        <fullName evidence="1">NDH-1 subunit N</fullName>
    </alternativeName>
</protein>
<reference key="1">
    <citation type="journal article" date="2009" name="PLoS Genet.">
        <title>The complete genome and proteome of Laribacter hongkongensis reveal potential mechanisms for adaptations to different temperatures and habitats.</title>
        <authorList>
            <person name="Woo P.C.Y."/>
            <person name="Lau S.K.P."/>
            <person name="Tse H."/>
            <person name="Teng J.L.L."/>
            <person name="Curreem S.O."/>
            <person name="Tsang A.K.L."/>
            <person name="Fan R.Y.Y."/>
            <person name="Wong G.K.M."/>
            <person name="Huang Y."/>
            <person name="Loman N.J."/>
            <person name="Snyder L.A.S."/>
            <person name="Cai J.J."/>
            <person name="Huang J.-D."/>
            <person name="Mak W."/>
            <person name="Pallen M.J."/>
            <person name="Lok S."/>
            <person name="Yuen K.-Y."/>
        </authorList>
    </citation>
    <scope>NUCLEOTIDE SEQUENCE [LARGE SCALE GENOMIC DNA]</scope>
    <source>
        <strain>HLHK9</strain>
    </source>
</reference>
<evidence type="ECO:0000255" key="1">
    <source>
        <dbReference type="HAMAP-Rule" id="MF_00445"/>
    </source>
</evidence>
<name>NUON_LARHH</name>
<feature type="chain" id="PRO_0000391170" description="NADH-quinone oxidoreductase subunit N">
    <location>
        <begin position="1"/>
        <end position="486"/>
    </location>
</feature>
<feature type="transmembrane region" description="Helical" evidence="1">
    <location>
        <begin position="11"/>
        <end position="31"/>
    </location>
</feature>
<feature type="transmembrane region" description="Helical" evidence="1">
    <location>
        <begin position="44"/>
        <end position="64"/>
    </location>
</feature>
<feature type="transmembrane region" description="Helical" evidence="1">
    <location>
        <begin position="74"/>
        <end position="94"/>
    </location>
</feature>
<feature type="transmembrane region" description="Helical" evidence="1">
    <location>
        <begin position="103"/>
        <end position="123"/>
    </location>
</feature>
<feature type="transmembrane region" description="Helical" evidence="1">
    <location>
        <begin position="128"/>
        <end position="148"/>
    </location>
</feature>
<feature type="transmembrane region" description="Helical" evidence="1">
    <location>
        <begin position="163"/>
        <end position="183"/>
    </location>
</feature>
<feature type="transmembrane region" description="Helical" evidence="1">
    <location>
        <begin position="206"/>
        <end position="226"/>
    </location>
</feature>
<feature type="transmembrane region" description="Helical" evidence="1">
    <location>
        <begin position="238"/>
        <end position="258"/>
    </location>
</feature>
<feature type="transmembrane region" description="Helical" evidence="1">
    <location>
        <begin position="267"/>
        <end position="287"/>
    </location>
</feature>
<feature type="transmembrane region" description="Helical" evidence="1">
    <location>
        <begin position="300"/>
        <end position="320"/>
    </location>
</feature>
<feature type="transmembrane region" description="Helical" evidence="1">
    <location>
        <begin position="328"/>
        <end position="348"/>
    </location>
</feature>
<feature type="transmembrane region" description="Helical" evidence="1">
    <location>
        <begin position="371"/>
        <end position="391"/>
    </location>
</feature>
<feature type="transmembrane region" description="Helical" evidence="1">
    <location>
        <begin position="404"/>
        <end position="424"/>
    </location>
</feature>
<feature type="transmembrane region" description="Helical" evidence="1">
    <location>
        <begin position="452"/>
        <end position="472"/>
    </location>
</feature>
<accession>C1DCB6</accession>
<keyword id="KW-0997">Cell inner membrane</keyword>
<keyword id="KW-1003">Cell membrane</keyword>
<keyword id="KW-0472">Membrane</keyword>
<keyword id="KW-0520">NAD</keyword>
<keyword id="KW-0874">Quinone</keyword>
<keyword id="KW-1185">Reference proteome</keyword>
<keyword id="KW-1278">Translocase</keyword>
<keyword id="KW-0812">Transmembrane</keyword>
<keyword id="KW-1133">Transmembrane helix</keyword>
<keyword id="KW-0813">Transport</keyword>
<keyword id="KW-0830">Ubiquinone</keyword>
<gene>
    <name evidence="1" type="primary">nuoN</name>
    <name type="ordered locus">LHK_00540</name>
</gene>
<comment type="function">
    <text evidence="1">NDH-1 shuttles electrons from NADH, via FMN and iron-sulfur (Fe-S) centers, to quinones in the respiratory chain. The immediate electron acceptor for the enzyme in this species is believed to be ubiquinone. Couples the redox reaction to proton translocation (for every two electrons transferred, four hydrogen ions are translocated across the cytoplasmic membrane), and thus conserves the redox energy in a proton gradient.</text>
</comment>
<comment type="catalytic activity">
    <reaction evidence="1">
        <text>a quinone + NADH + 5 H(+)(in) = a quinol + NAD(+) + 4 H(+)(out)</text>
        <dbReference type="Rhea" id="RHEA:57888"/>
        <dbReference type="ChEBI" id="CHEBI:15378"/>
        <dbReference type="ChEBI" id="CHEBI:24646"/>
        <dbReference type="ChEBI" id="CHEBI:57540"/>
        <dbReference type="ChEBI" id="CHEBI:57945"/>
        <dbReference type="ChEBI" id="CHEBI:132124"/>
    </reaction>
</comment>
<comment type="subunit">
    <text evidence="1">NDH-1 is composed of 14 different subunits. Subunits NuoA, H, J, K, L, M, N constitute the membrane sector of the complex.</text>
</comment>
<comment type="subcellular location">
    <subcellularLocation>
        <location evidence="1">Cell inner membrane</location>
        <topology evidence="1">Multi-pass membrane protein</topology>
    </subcellularLocation>
</comment>
<comment type="similarity">
    <text evidence="1">Belongs to the complex I subunit 2 family.</text>
</comment>
<sequence>MSWADLNLMPALPEIVLLIAVSAILIIDLFVKGERRGVTYLLSMLALVATGAATLAAWLPYPVLTFSGMYVADPIASVAKLGLVVATGVAMIYARQYAFDRGFLKGELFTLMLFALLGMCVMVSASHMLTLYIGLELLSLALYALIALSRESVPATEAAMKYFVLGALASGLLLYGVSMVYGGTQSLHIVAVAQSIASGNANVTLVSLGLVFIVAGLAFKLGAVPFHMWVPDVYQGAPTAVTLFVGSAPKLAAFVFVIRFLAQALEPAAVAWQPMLILLAIASLVVGNLAAIMQTNIKRMLAYSTISHMGFMLIGILAATPAGYSAAMFYAITYMLMALAGFGVLLALSRAGFDCETLDDLKGLNRKNAWYALLVLLVMFSMAGIPPLVGFYAKFAVLEAAVNVGLTWLAVVGVVMSLIGAFYYLRVVKAVYFDEATGSAGDALTVGGDMKLVLGVNGLVLLGLGILPNGLYTLCLEAVRQSLGTL</sequence>
<dbReference type="EC" id="7.1.1.-" evidence="1"/>
<dbReference type="EMBL" id="CP001154">
    <property type="protein sequence ID" value="ACO73533.1"/>
    <property type="molecule type" value="Genomic_DNA"/>
</dbReference>
<dbReference type="RefSeq" id="WP_012696025.1">
    <property type="nucleotide sequence ID" value="NC_012559.1"/>
</dbReference>
<dbReference type="SMR" id="C1DCB6"/>
<dbReference type="STRING" id="557598.LHK_00540"/>
<dbReference type="KEGG" id="lhk:LHK_00540"/>
<dbReference type="eggNOG" id="COG1007">
    <property type="taxonomic scope" value="Bacteria"/>
</dbReference>
<dbReference type="HOGENOM" id="CLU_007100_1_3_4"/>
<dbReference type="Proteomes" id="UP000002010">
    <property type="component" value="Chromosome"/>
</dbReference>
<dbReference type="GO" id="GO:0005886">
    <property type="term" value="C:plasma membrane"/>
    <property type="evidence" value="ECO:0007669"/>
    <property type="project" value="UniProtKB-SubCell"/>
</dbReference>
<dbReference type="GO" id="GO:0008137">
    <property type="term" value="F:NADH dehydrogenase (ubiquinone) activity"/>
    <property type="evidence" value="ECO:0007669"/>
    <property type="project" value="InterPro"/>
</dbReference>
<dbReference type="GO" id="GO:0050136">
    <property type="term" value="F:NADH:ubiquinone reductase (non-electrogenic) activity"/>
    <property type="evidence" value="ECO:0007669"/>
    <property type="project" value="UniProtKB-UniRule"/>
</dbReference>
<dbReference type="GO" id="GO:0048038">
    <property type="term" value="F:quinone binding"/>
    <property type="evidence" value="ECO:0007669"/>
    <property type="project" value="UniProtKB-KW"/>
</dbReference>
<dbReference type="GO" id="GO:0042773">
    <property type="term" value="P:ATP synthesis coupled electron transport"/>
    <property type="evidence" value="ECO:0007669"/>
    <property type="project" value="InterPro"/>
</dbReference>
<dbReference type="HAMAP" id="MF_00445">
    <property type="entry name" value="NDH1_NuoN_1"/>
    <property type="match status" value="1"/>
</dbReference>
<dbReference type="InterPro" id="IPR010096">
    <property type="entry name" value="NADH-Q_OxRdtase_suN/2"/>
</dbReference>
<dbReference type="InterPro" id="IPR001750">
    <property type="entry name" value="ND/Mrp_TM"/>
</dbReference>
<dbReference type="NCBIfam" id="TIGR01770">
    <property type="entry name" value="NDH_I_N"/>
    <property type="match status" value="1"/>
</dbReference>
<dbReference type="NCBIfam" id="NF004442">
    <property type="entry name" value="PRK05777.1-5"/>
    <property type="match status" value="1"/>
</dbReference>
<dbReference type="PANTHER" id="PTHR22773">
    <property type="entry name" value="NADH DEHYDROGENASE"/>
    <property type="match status" value="1"/>
</dbReference>
<dbReference type="Pfam" id="PF00361">
    <property type="entry name" value="Proton_antipo_M"/>
    <property type="match status" value="1"/>
</dbReference>
<dbReference type="PRINTS" id="PR01434">
    <property type="entry name" value="NADHDHGNASE5"/>
</dbReference>